<accession>A0A1L9WUV2</accession>
<comment type="function">
    <text evidence="4">Cytochrome P450 monooxygenase; part of the gene cluster that mediates the biosynthesis of aculenes, a unique type of norsesquiterpenes that contain a nordaucane skeleton linked to an L-proline moiety and are of mixed biosynthetic origin (PubMed:31618514). The pathway begins with the synthesis of dauca-4,7-diene by the terpene cyclase aneC using farnesyl pyrophosphate (FPP) as substrate (PubMed:31618514). The cytochrome P450 monooxygenase aneF then performs the initial oxidation at C-12 of dauca-4,7-diene to yield asperaculane D (PubMed:31618514). Asperaculane D is substrate of the cytochrome P450 monooxygenase aneD for C-10 hydroxylation to yield asperaculane E (PubMed:31618514). The cytochrome P450 monooxygenase aneG then converts asperaculane E into aculene D via C-2 oxidation (PubMed:31618514). The monomodular nonribosomal peptide synthtase aneB adenylates L-proline and the thiohydrolase aneE transfers this activated L-proline derivative to aculenes D and C to produce respectively aculenes B and A (PubMed:31618514). The dioxygenase aneA converts aculene D into aculene C, and aculene B into aculene A by introducing the 5,6-alkene moiety (PubMed:31618514). Asperculanes A, B, C and F, as well as 14-prolyl asperculane C, might be shunt products of the pathway (PubMed:31618514).</text>
</comment>
<comment type="catalytic activity">
    <reaction evidence="4">
        <text>asperaculane E + reduced [NADPH--hemoprotein reductase] + O2 = asperaculane G + oxidized [NADPH--hemoprotein reductase] + H2O + H(+)</text>
        <dbReference type="Rhea" id="RHEA:65088"/>
        <dbReference type="Rhea" id="RHEA-COMP:11964"/>
        <dbReference type="Rhea" id="RHEA-COMP:11965"/>
        <dbReference type="ChEBI" id="CHEBI:15377"/>
        <dbReference type="ChEBI" id="CHEBI:15378"/>
        <dbReference type="ChEBI" id="CHEBI:15379"/>
        <dbReference type="ChEBI" id="CHEBI:57618"/>
        <dbReference type="ChEBI" id="CHEBI:58210"/>
        <dbReference type="ChEBI" id="CHEBI:155909"/>
        <dbReference type="ChEBI" id="CHEBI:155911"/>
    </reaction>
    <physiologicalReaction direction="left-to-right" evidence="4">
        <dbReference type="Rhea" id="RHEA:65089"/>
    </physiologicalReaction>
</comment>
<comment type="catalytic activity">
    <reaction evidence="4">
        <text>asperaculane G + reduced [NADPH--hemoprotein reductase] + O2 = aculene D + oxidized [NADPH--hemoprotein reductase] + CO2 + 2 H2O</text>
        <dbReference type="Rhea" id="RHEA:65092"/>
        <dbReference type="Rhea" id="RHEA-COMP:11964"/>
        <dbReference type="Rhea" id="RHEA-COMP:11965"/>
        <dbReference type="ChEBI" id="CHEBI:15377"/>
        <dbReference type="ChEBI" id="CHEBI:15379"/>
        <dbReference type="ChEBI" id="CHEBI:16526"/>
        <dbReference type="ChEBI" id="CHEBI:57618"/>
        <dbReference type="ChEBI" id="CHEBI:58210"/>
        <dbReference type="ChEBI" id="CHEBI:155910"/>
        <dbReference type="ChEBI" id="CHEBI:155911"/>
    </reaction>
    <physiologicalReaction direction="left-to-right" evidence="4">
        <dbReference type="Rhea" id="RHEA:65093"/>
    </physiologicalReaction>
</comment>
<comment type="catalytic activity">
    <reaction evidence="4">
        <text>asperaculane E + 2 reduced [NADPH--hemoprotein reductase] + 2 O2 = aculene D + 2 oxidized [NADPH--hemoprotein reductase] + CO2 + 3 H2O + H(+)</text>
        <dbReference type="Rhea" id="RHEA:65084"/>
        <dbReference type="Rhea" id="RHEA-COMP:11964"/>
        <dbReference type="Rhea" id="RHEA-COMP:11965"/>
        <dbReference type="ChEBI" id="CHEBI:15377"/>
        <dbReference type="ChEBI" id="CHEBI:15378"/>
        <dbReference type="ChEBI" id="CHEBI:15379"/>
        <dbReference type="ChEBI" id="CHEBI:16526"/>
        <dbReference type="ChEBI" id="CHEBI:57618"/>
        <dbReference type="ChEBI" id="CHEBI:58210"/>
        <dbReference type="ChEBI" id="CHEBI:155909"/>
        <dbReference type="ChEBI" id="CHEBI:155910"/>
    </reaction>
    <physiologicalReaction direction="left-to-right" evidence="4">
        <dbReference type="Rhea" id="RHEA:65085"/>
    </physiologicalReaction>
</comment>
<comment type="cofactor">
    <cofactor evidence="1">
        <name>heme</name>
        <dbReference type="ChEBI" id="CHEBI:30413"/>
    </cofactor>
</comment>
<comment type="pathway">
    <text evidence="4">Secondary metabolite biosynthesis.</text>
</comment>
<comment type="subcellular location">
    <subcellularLocation>
        <location evidence="2">Membrane</location>
        <topology evidence="2">Single-pass membrane protein</topology>
    </subcellularLocation>
</comment>
<comment type="disruption phenotype">
    <text evidence="4">Abolishes the formation of aculene A and accumulates a major product,asperculane A, along with two minor products, asperculane C and 14-prolyl asperculane C.</text>
</comment>
<comment type="similarity">
    <text evidence="6">Belongs to the cytochrome P450 family.</text>
</comment>
<evidence type="ECO:0000250" key="1">
    <source>
        <dbReference type="UniProtKB" id="P04798"/>
    </source>
</evidence>
<evidence type="ECO:0000255" key="2"/>
<evidence type="ECO:0000255" key="3">
    <source>
        <dbReference type="PROSITE-ProRule" id="PRU00498"/>
    </source>
</evidence>
<evidence type="ECO:0000269" key="4">
    <source>
    </source>
</evidence>
<evidence type="ECO:0000303" key="5">
    <source>
    </source>
</evidence>
<evidence type="ECO:0000305" key="6"/>
<sequence length="530" mass="59968">MNATAQALVLPFITQVTRAVSLSENVKVLGGIPFAEDGTYLEWLSILGFTIGCYYVIYTFYALCFHPLRKYPGPWHLAVSNIPNRWSTISGNSSYWLYDLHEKYGPIVRVAPNEISYSDPQAWQDIYGPQPNQRLGMPKDPKFFSSFEDKKTAASIITSQPKDYMRMRHIYSYGFSKQVMLAKEEMIQGIIDRAMEALRQTKQQPQDIVQIFRATDFSIVTEIVFGKAYHIFDRPTYQPWFKSLMGWIRSTAVITATTDYPLGKLAAWLLTPRSVLKQRNVYLKYVNGEIEERIGESNAGRKDVVQLMFETTDQPKLAESDIRANLPFMVIAASETTTTLMSGMIAHLLNSPDALSQLTAEVRGRFRSPSDITIATVNNLPFLNACVNEALRVYPAAPTQLPRVVPGEGATVCNRWVPGGTKVYVAPYATFRSAENFYQPDAFLPQRWLPENGESFDVDKKNAWRPFGLGAHECPGQVITNLITRLIMCKLLLSFDLELCADSQDWLSRQPVWIVWDKPELLIKARPAAA</sequence>
<name>ANEG_ASPA1</name>
<organism>
    <name type="scientific">Aspergillus aculeatus (strain ATCC 16872 / CBS 172.66 / WB 5094)</name>
    <dbReference type="NCBI Taxonomy" id="690307"/>
    <lineage>
        <taxon>Eukaryota</taxon>
        <taxon>Fungi</taxon>
        <taxon>Dikarya</taxon>
        <taxon>Ascomycota</taxon>
        <taxon>Pezizomycotina</taxon>
        <taxon>Eurotiomycetes</taxon>
        <taxon>Eurotiomycetidae</taxon>
        <taxon>Eurotiales</taxon>
        <taxon>Aspergillaceae</taxon>
        <taxon>Aspergillus</taxon>
        <taxon>Aspergillus subgen. Circumdati</taxon>
    </lineage>
</organism>
<keyword id="KW-0325">Glycoprotein</keyword>
<keyword id="KW-0349">Heme</keyword>
<keyword id="KW-0408">Iron</keyword>
<keyword id="KW-0472">Membrane</keyword>
<keyword id="KW-0479">Metal-binding</keyword>
<keyword id="KW-0503">Monooxygenase</keyword>
<keyword id="KW-0560">Oxidoreductase</keyword>
<keyword id="KW-1185">Reference proteome</keyword>
<keyword id="KW-0812">Transmembrane</keyword>
<keyword id="KW-1133">Transmembrane helix</keyword>
<proteinExistence type="evidence at protein level"/>
<protein>
    <recommendedName>
        <fullName evidence="5">Cytochrome P450 monooxygenase aneG</fullName>
        <ecNumber evidence="4">1.-.-.-</ecNumber>
    </recommendedName>
    <alternativeName>
        <fullName evidence="5">Aculenes biosynthesis cluster protein G</fullName>
    </alternativeName>
</protein>
<feature type="chain" id="PRO_0000449095" description="Cytochrome P450 monooxygenase aneG">
    <location>
        <begin position="1"/>
        <end position="530"/>
    </location>
</feature>
<feature type="transmembrane region" description="Helical" evidence="2">
    <location>
        <begin position="43"/>
        <end position="63"/>
    </location>
</feature>
<feature type="binding site" description="axial binding residue" evidence="1">
    <location>
        <position position="474"/>
    </location>
    <ligand>
        <name>heme</name>
        <dbReference type="ChEBI" id="CHEBI:30413"/>
    </ligand>
    <ligandPart>
        <name>Fe</name>
        <dbReference type="ChEBI" id="CHEBI:18248"/>
    </ligandPart>
</feature>
<feature type="glycosylation site" description="N-linked (GlcNAc...) asparagine" evidence="3">
    <location>
        <position position="2"/>
    </location>
</feature>
<feature type="glycosylation site" description="N-linked (GlcNAc...) asparagine" evidence="3">
    <location>
        <position position="92"/>
    </location>
</feature>
<gene>
    <name evidence="5" type="primary">aneG</name>
    <name type="ORF">ASPACDRAFT_119792</name>
</gene>
<dbReference type="EC" id="1.-.-.-" evidence="4"/>
<dbReference type="EMBL" id="KV878977">
    <property type="protein sequence ID" value="OJJ99918.1"/>
    <property type="molecule type" value="Genomic_DNA"/>
</dbReference>
<dbReference type="RefSeq" id="XP_020056258.1">
    <property type="nucleotide sequence ID" value="XM_020196278.1"/>
</dbReference>
<dbReference type="SMR" id="A0A1L9WUV2"/>
<dbReference type="STRING" id="690307.A0A1L9WUV2"/>
<dbReference type="GlyCosmos" id="A0A1L9WUV2">
    <property type="glycosylation" value="2 sites, No reported glycans"/>
</dbReference>
<dbReference type="GeneID" id="30970092"/>
<dbReference type="VEuPathDB" id="FungiDB:ASPACDRAFT_119792"/>
<dbReference type="OMA" id="CYYLQFR"/>
<dbReference type="OrthoDB" id="1470350at2759"/>
<dbReference type="Proteomes" id="UP000184546">
    <property type="component" value="Unassembled WGS sequence"/>
</dbReference>
<dbReference type="GO" id="GO:0016020">
    <property type="term" value="C:membrane"/>
    <property type="evidence" value="ECO:0007669"/>
    <property type="project" value="UniProtKB-SubCell"/>
</dbReference>
<dbReference type="GO" id="GO:0020037">
    <property type="term" value="F:heme binding"/>
    <property type="evidence" value="ECO:0007669"/>
    <property type="project" value="InterPro"/>
</dbReference>
<dbReference type="GO" id="GO:0005506">
    <property type="term" value="F:iron ion binding"/>
    <property type="evidence" value="ECO:0007669"/>
    <property type="project" value="InterPro"/>
</dbReference>
<dbReference type="GO" id="GO:0004497">
    <property type="term" value="F:monooxygenase activity"/>
    <property type="evidence" value="ECO:0007669"/>
    <property type="project" value="UniProtKB-KW"/>
</dbReference>
<dbReference type="GO" id="GO:0016705">
    <property type="term" value="F:oxidoreductase activity, acting on paired donors, with incorporation or reduction of molecular oxygen"/>
    <property type="evidence" value="ECO:0007669"/>
    <property type="project" value="InterPro"/>
</dbReference>
<dbReference type="GO" id="GO:0009058">
    <property type="term" value="P:biosynthetic process"/>
    <property type="evidence" value="ECO:0007669"/>
    <property type="project" value="UniProtKB-ARBA"/>
</dbReference>
<dbReference type="CDD" id="cd11058">
    <property type="entry name" value="CYP60B-like"/>
    <property type="match status" value="1"/>
</dbReference>
<dbReference type="Gene3D" id="1.10.630.10">
    <property type="entry name" value="Cytochrome P450"/>
    <property type="match status" value="1"/>
</dbReference>
<dbReference type="InterPro" id="IPR001128">
    <property type="entry name" value="Cyt_P450"/>
</dbReference>
<dbReference type="InterPro" id="IPR017972">
    <property type="entry name" value="Cyt_P450_CS"/>
</dbReference>
<dbReference type="InterPro" id="IPR002401">
    <property type="entry name" value="Cyt_P450_E_grp-I"/>
</dbReference>
<dbReference type="InterPro" id="IPR036396">
    <property type="entry name" value="Cyt_P450_sf"/>
</dbReference>
<dbReference type="InterPro" id="IPR050121">
    <property type="entry name" value="Cytochrome_P450_monoxygenase"/>
</dbReference>
<dbReference type="PANTHER" id="PTHR24305">
    <property type="entry name" value="CYTOCHROME P450"/>
    <property type="match status" value="1"/>
</dbReference>
<dbReference type="PANTHER" id="PTHR24305:SF210">
    <property type="entry name" value="CYTOCHROME P450 MONOOXYGENASE ASQL-RELATED"/>
    <property type="match status" value="1"/>
</dbReference>
<dbReference type="Pfam" id="PF00067">
    <property type="entry name" value="p450"/>
    <property type="match status" value="1"/>
</dbReference>
<dbReference type="PRINTS" id="PR00463">
    <property type="entry name" value="EP450I"/>
</dbReference>
<dbReference type="PRINTS" id="PR00385">
    <property type="entry name" value="P450"/>
</dbReference>
<dbReference type="SUPFAM" id="SSF48264">
    <property type="entry name" value="Cytochrome P450"/>
    <property type="match status" value="1"/>
</dbReference>
<dbReference type="PROSITE" id="PS00086">
    <property type="entry name" value="CYTOCHROME_P450"/>
    <property type="match status" value="1"/>
</dbReference>
<reference key="1">
    <citation type="journal article" date="2017" name="Genome Biol.">
        <title>Comparative genomics reveals high biological diversity and specific adaptations in the industrially and medically important fungal genus Aspergillus.</title>
        <authorList>
            <person name="de Vries R.P."/>
            <person name="Riley R."/>
            <person name="Wiebenga A."/>
            <person name="Aguilar-Osorio G."/>
            <person name="Amillis S."/>
            <person name="Uchima C.A."/>
            <person name="Anderluh G."/>
            <person name="Asadollahi M."/>
            <person name="Askin M."/>
            <person name="Barry K."/>
            <person name="Battaglia E."/>
            <person name="Bayram O."/>
            <person name="Benocci T."/>
            <person name="Braus-Stromeyer S.A."/>
            <person name="Caldana C."/>
            <person name="Canovas D."/>
            <person name="Cerqueira G.C."/>
            <person name="Chen F."/>
            <person name="Chen W."/>
            <person name="Choi C."/>
            <person name="Clum A."/>
            <person name="Dos Santos R.A."/>
            <person name="Damasio A.R."/>
            <person name="Diallinas G."/>
            <person name="Emri T."/>
            <person name="Fekete E."/>
            <person name="Flipphi M."/>
            <person name="Freyberg S."/>
            <person name="Gallo A."/>
            <person name="Gournas C."/>
            <person name="Habgood R."/>
            <person name="Hainaut M."/>
            <person name="Harispe M.L."/>
            <person name="Henrissat B."/>
            <person name="Hilden K.S."/>
            <person name="Hope R."/>
            <person name="Hossain A."/>
            <person name="Karabika E."/>
            <person name="Karaffa L."/>
            <person name="Karanyi Z."/>
            <person name="Krasevec N."/>
            <person name="Kuo A."/>
            <person name="Kusch H."/>
            <person name="LaButti K."/>
            <person name="Lagendijk E.L."/>
            <person name="Lapidus A."/>
            <person name="Levasseur A."/>
            <person name="Lindquist E."/>
            <person name="Lipzen A."/>
            <person name="Logrieco A.F."/>
            <person name="MacCabe A."/>
            <person name="Maekelae M.R."/>
            <person name="Malavazi I."/>
            <person name="Melin P."/>
            <person name="Meyer V."/>
            <person name="Mielnichuk N."/>
            <person name="Miskei M."/>
            <person name="Molnar A.P."/>
            <person name="Mule G."/>
            <person name="Ngan C.Y."/>
            <person name="Orejas M."/>
            <person name="Orosz E."/>
            <person name="Ouedraogo J.P."/>
            <person name="Overkamp K.M."/>
            <person name="Park H.-S."/>
            <person name="Perrone G."/>
            <person name="Piumi F."/>
            <person name="Punt P.J."/>
            <person name="Ram A.F."/>
            <person name="Ramon A."/>
            <person name="Rauscher S."/>
            <person name="Record E."/>
            <person name="Riano-Pachon D.M."/>
            <person name="Robert V."/>
            <person name="Roehrig J."/>
            <person name="Ruller R."/>
            <person name="Salamov A."/>
            <person name="Salih N.S."/>
            <person name="Samson R.A."/>
            <person name="Sandor E."/>
            <person name="Sanguinetti M."/>
            <person name="Schuetze T."/>
            <person name="Sepcic K."/>
            <person name="Shelest E."/>
            <person name="Sherlock G."/>
            <person name="Sophianopoulou V."/>
            <person name="Squina F.M."/>
            <person name="Sun H."/>
            <person name="Susca A."/>
            <person name="Todd R.B."/>
            <person name="Tsang A."/>
            <person name="Unkles S.E."/>
            <person name="van de Wiele N."/>
            <person name="van Rossen-Uffink D."/>
            <person name="Oliveira J.V."/>
            <person name="Vesth T.C."/>
            <person name="Visser J."/>
            <person name="Yu J.-H."/>
            <person name="Zhou M."/>
            <person name="Andersen M.R."/>
            <person name="Archer D.B."/>
            <person name="Baker S.E."/>
            <person name="Benoit I."/>
            <person name="Brakhage A.A."/>
            <person name="Braus G.H."/>
            <person name="Fischer R."/>
            <person name="Frisvad J.C."/>
            <person name="Goldman G.H."/>
            <person name="Houbraken J."/>
            <person name="Oakley B."/>
            <person name="Pocsi I."/>
            <person name="Scazzocchio C."/>
            <person name="Seiboth B."/>
            <person name="vanKuyk P.A."/>
            <person name="Wortman J."/>
            <person name="Dyer P.S."/>
            <person name="Grigoriev I.V."/>
        </authorList>
    </citation>
    <scope>NUCLEOTIDE SEQUENCE [LARGE SCALE GENOMIC DNA]</scope>
    <source>
        <strain>ATCC 16872 / CBS 172.66 / WB 5094</strain>
    </source>
</reference>
<reference key="2">
    <citation type="journal article" date="2019" name="Angew. Chem. Int. Ed.">
        <title>The biosynthesis of norsesquiterpene aculenes requires three cytochrome P450 enzymes to catalyze a stepwise demethylation process.</title>
        <authorList>
            <person name="Lee C.F."/>
            <person name="Chen L.X."/>
            <person name="Chiang C.Y."/>
            <person name="Lai C.Y."/>
            <person name="Lin H.C."/>
        </authorList>
    </citation>
    <scope>FUNCTION</scope>
    <scope>DISRUPTION PHENOTYPE</scope>
    <scope>CATALYTIC ACTIVITY</scope>
    <scope>PATHWAY</scope>
</reference>